<dbReference type="EMBL" id="J05507">
    <property type="protein sequence ID" value="AAA32904.1"/>
    <property type="molecule type" value="Genomic_DNA"/>
</dbReference>
<dbReference type="EMBL" id="AL050300">
    <property type="protein sequence ID" value="CAB43405.1"/>
    <property type="molecule type" value="Genomic_DNA"/>
</dbReference>
<dbReference type="EMBL" id="AL353912">
    <property type="status" value="NOT_ANNOTATED_CDS"/>
    <property type="molecule type" value="Genomic_DNA"/>
</dbReference>
<dbReference type="EMBL" id="CP002686">
    <property type="protein sequence ID" value="AEE78966.1"/>
    <property type="molecule type" value="Genomic_DNA"/>
</dbReference>
<dbReference type="EMBL" id="AY035148">
    <property type="protein sequence ID" value="AAK59652.1"/>
    <property type="molecule type" value="mRNA"/>
</dbReference>
<dbReference type="EMBL" id="AY059080">
    <property type="protein sequence ID" value="AAL15186.1"/>
    <property type="molecule type" value="mRNA"/>
</dbReference>
<dbReference type="EMBL" id="AY085820">
    <property type="protein sequence ID" value="AAM63036.1"/>
    <property type="molecule type" value="mRNA"/>
</dbReference>
<dbReference type="EMBL" id="Z29051">
    <property type="protein sequence ID" value="CAA82300.1"/>
    <property type="molecule type" value="mRNA"/>
</dbReference>
<dbReference type="PIR" id="A36571">
    <property type="entry name" value="A36571"/>
</dbReference>
<dbReference type="RefSeq" id="NP_565836.1">
    <property type="nucleotide sequence ID" value="NM_129175.3"/>
</dbReference>
<dbReference type="RefSeq" id="NP_566969.1">
    <property type="nucleotide sequence ID" value="NM_115119.4"/>
</dbReference>
<dbReference type="SMR" id="Q42202"/>
<dbReference type="BioGRID" id="3533">
    <property type="interactions" value="1"/>
</dbReference>
<dbReference type="BioGRID" id="9743">
    <property type="interactions" value="12"/>
</dbReference>
<dbReference type="FunCoup" id="Q42202">
    <property type="interactions" value="3316"/>
</dbReference>
<dbReference type="STRING" id="3702.Q42202"/>
<dbReference type="EnsemblPlants" id="AT2G36170.1">
    <property type="protein sequence ID" value="AT2G36170.1"/>
    <property type="gene ID" value="AT2G36170"/>
</dbReference>
<dbReference type="EnsemblPlants" id="AT3G52590.1">
    <property type="protein sequence ID" value="AT3G52590.1"/>
    <property type="gene ID" value="AT3G52590"/>
</dbReference>
<dbReference type="GeneID" id="824425"/>
<dbReference type="Gramene" id="AT2G36170.1">
    <property type="protein sequence ID" value="AT2G36170.1"/>
    <property type="gene ID" value="AT2G36170"/>
</dbReference>
<dbReference type="Gramene" id="AT3G52590.1">
    <property type="protein sequence ID" value="AT3G52590.1"/>
    <property type="gene ID" value="AT3G52590"/>
</dbReference>
<dbReference type="KEGG" id="ath:AT2G36170"/>
<dbReference type="KEGG" id="ath:AT3G52590"/>
<dbReference type="Araport" id="AT3G52590"/>
<dbReference type="TAIR" id="AT3G52590">
    <property type="gene designation" value="UBQ1"/>
</dbReference>
<dbReference type="HOGENOM" id="CLU_010412_3_4_1"/>
<dbReference type="InParanoid" id="Q42202"/>
<dbReference type="OMA" id="AMKYNCE"/>
<dbReference type="OrthoDB" id="472at2759"/>
<dbReference type="CD-CODE" id="4299E36E">
    <property type="entry name" value="Nucleolus"/>
</dbReference>
<dbReference type="PRO" id="PR:Q42202"/>
<dbReference type="Proteomes" id="UP000006548">
    <property type="component" value="Chromosome 3"/>
</dbReference>
<dbReference type="ExpressionAtlas" id="Q42202">
    <property type="expression patterns" value="baseline and differential"/>
</dbReference>
<dbReference type="GO" id="GO:0005829">
    <property type="term" value="C:cytosol"/>
    <property type="evidence" value="ECO:0007005"/>
    <property type="project" value="TAIR"/>
</dbReference>
<dbReference type="GO" id="GO:0005634">
    <property type="term" value="C:nucleus"/>
    <property type="evidence" value="ECO:0007669"/>
    <property type="project" value="UniProtKB-SubCell"/>
</dbReference>
<dbReference type="GO" id="GO:1990904">
    <property type="term" value="C:ribonucleoprotein complex"/>
    <property type="evidence" value="ECO:0007669"/>
    <property type="project" value="UniProtKB-KW"/>
</dbReference>
<dbReference type="GO" id="GO:0005840">
    <property type="term" value="C:ribosome"/>
    <property type="evidence" value="ECO:0007669"/>
    <property type="project" value="UniProtKB-KW"/>
</dbReference>
<dbReference type="GO" id="GO:0003729">
    <property type="term" value="F:mRNA binding"/>
    <property type="evidence" value="ECO:0000314"/>
    <property type="project" value="TAIR"/>
</dbReference>
<dbReference type="GO" id="GO:0003735">
    <property type="term" value="F:structural constituent of ribosome"/>
    <property type="evidence" value="ECO:0000250"/>
    <property type="project" value="TAIR"/>
</dbReference>
<dbReference type="GO" id="GO:0016567">
    <property type="term" value="P:protein ubiquitination"/>
    <property type="evidence" value="ECO:0000304"/>
    <property type="project" value="TAIR"/>
</dbReference>
<dbReference type="GO" id="GO:0006412">
    <property type="term" value="P:translation"/>
    <property type="evidence" value="ECO:0007669"/>
    <property type="project" value="InterPro"/>
</dbReference>
<dbReference type="CDD" id="cd01803">
    <property type="entry name" value="Ubl_ubiquitin"/>
    <property type="match status" value="1"/>
</dbReference>
<dbReference type="FunFam" id="3.10.20.90:FF:000014">
    <property type="entry name" value="Ubiquitin-60S ribosomal L40 fusion"/>
    <property type="match status" value="1"/>
</dbReference>
<dbReference type="FunFam" id="4.10.1060.50:FF:000001">
    <property type="entry name" value="ubiquitin-60S ribosomal protein L40"/>
    <property type="match status" value="1"/>
</dbReference>
<dbReference type="Gene3D" id="4.10.1060.50">
    <property type="match status" value="1"/>
</dbReference>
<dbReference type="Gene3D" id="3.10.20.90">
    <property type="entry name" value="Phosphatidylinositol 3-kinase Catalytic Subunit, Chain A, domain 1"/>
    <property type="match status" value="1"/>
</dbReference>
<dbReference type="InterPro" id="IPR001975">
    <property type="entry name" value="Ribosomal_eL40_dom"/>
</dbReference>
<dbReference type="InterPro" id="IPR038587">
    <property type="entry name" value="Ribosomal_eL40_sf"/>
</dbReference>
<dbReference type="InterPro" id="IPR011332">
    <property type="entry name" value="Ribosomal_zn-bd"/>
</dbReference>
<dbReference type="InterPro" id="IPR000626">
    <property type="entry name" value="Ubiquitin-like_dom"/>
</dbReference>
<dbReference type="InterPro" id="IPR029071">
    <property type="entry name" value="Ubiquitin-like_domsf"/>
</dbReference>
<dbReference type="InterPro" id="IPR019954">
    <property type="entry name" value="Ubiquitin_CS"/>
</dbReference>
<dbReference type="InterPro" id="IPR019956">
    <property type="entry name" value="Ubiquitin_dom"/>
</dbReference>
<dbReference type="InterPro" id="IPR050158">
    <property type="entry name" value="Ubiquitin_ubiquitin-like"/>
</dbReference>
<dbReference type="PANTHER" id="PTHR10666">
    <property type="entry name" value="UBIQUITIN"/>
    <property type="match status" value="1"/>
</dbReference>
<dbReference type="Pfam" id="PF01020">
    <property type="entry name" value="Ribosomal_L40e"/>
    <property type="match status" value="1"/>
</dbReference>
<dbReference type="Pfam" id="PF00240">
    <property type="entry name" value="ubiquitin"/>
    <property type="match status" value="1"/>
</dbReference>
<dbReference type="PRINTS" id="PR00348">
    <property type="entry name" value="UBIQUITIN"/>
</dbReference>
<dbReference type="SMART" id="SM01377">
    <property type="entry name" value="Ribosomal_L40e"/>
    <property type="match status" value="1"/>
</dbReference>
<dbReference type="SMART" id="SM00213">
    <property type="entry name" value="UBQ"/>
    <property type="match status" value="1"/>
</dbReference>
<dbReference type="SUPFAM" id="SSF54236">
    <property type="entry name" value="Ubiquitin-like"/>
    <property type="match status" value="1"/>
</dbReference>
<dbReference type="SUPFAM" id="SSF57829">
    <property type="entry name" value="Zn-binding ribosomal proteins"/>
    <property type="match status" value="1"/>
</dbReference>
<dbReference type="PROSITE" id="PS00299">
    <property type="entry name" value="UBIQUITIN_1"/>
    <property type="match status" value="1"/>
</dbReference>
<dbReference type="PROSITE" id="PS50053">
    <property type="entry name" value="UBIQUITIN_2"/>
    <property type="match status" value="1"/>
</dbReference>
<keyword id="KW-0963">Cytoplasm</keyword>
<keyword id="KW-1017">Isopeptide bond</keyword>
<keyword id="KW-0539">Nucleus</keyword>
<keyword id="KW-1185">Reference proteome</keyword>
<keyword id="KW-0687">Ribonucleoprotein</keyword>
<keyword id="KW-0689">Ribosomal protein</keyword>
<evidence type="ECO:0000250" key="1"/>
<evidence type="ECO:0000255" key="2">
    <source>
        <dbReference type="PROSITE-ProRule" id="PRU00214"/>
    </source>
</evidence>
<evidence type="ECO:0000303" key="3">
    <source>
    </source>
</evidence>
<evidence type="ECO:0000305" key="4"/>
<comment type="function">
    <molecule>Ubiquitin</molecule>
    <text evidence="1">Exists either covalently attached to another protein, or free (unanchored). When covalently bound, it is conjugated to target proteins via an isopeptide bond either as a monomer (monoubiquitin), a polymer linked via different Lys residues of the ubiquitin (polyubiquitin chains) or a linear polymer linked via the initiator Met of the ubiquitin (linear polyubiquitin chains). Polyubiquitin chains, when attached to a target protein, have different functions depending on the Lys residue of the ubiquitin that is linked: Lys-11-linked is involved in ERAD (endoplasmic reticulum-associated degradation) and in cell-cycle regulation; Lys-29-linked is involved in lysosomal degradation; Lys-33-linked is involved in kinase modification; Lys-48-linked is involved in protein degradation via the proteasome; Lys-63-linked is involved in endocytosis, and DNA-damage responses. Linear polymer chains formed via attachment by the initiator Met lead to cell signaling. Ubiquitin is usually conjugated to Lys residues of target proteins, however, in rare cases, conjugation to Cys or Ser residues has been observed. When polyubiquitin is free (unanchored-polyubiquitin), it also has distinct roles, such as in activation of protein kinases, and in signaling (By similarity).</text>
</comment>
<comment type="function">
    <molecule>Large ribosomal subunit protein eL40y</molecule>
    <text>Component of the 60S subunit of the ribosome.</text>
</comment>
<comment type="subunit">
    <molecule>Large ribosomal subunit protein eL40y</molecule>
    <text evidence="1">Part of the 60S ribosomal subunit.</text>
</comment>
<comment type="subcellular location">
    <molecule>Ubiquitin</molecule>
    <subcellularLocation>
        <location evidence="1">Cytoplasm</location>
    </subcellularLocation>
    <subcellularLocation>
        <location evidence="1">Nucleus</location>
    </subcellularLocation>
</comment>
<comment type="subcellular location">
    <molecule>Large ribosomal subunit protein eL40y</molecule>
    <subcellularLocation>
        <location evidence="1">Cytoplasm</location>
    </subcellularLocation>
</comment>
<comment type="miscellaneous">
    <text>Ubiquitin is encoded by 16 different genes. Ubiquitin is generally synthesized as a polyubiquitin precursor with tandem head to tail repeats. Often, there are one to three additional amino acids after the last repeat, removed in the mature protein. Alternatively, ubiquitin extension protein is synthesized as a single copy of ubiquitin fused to a ribosomal protein (either eL40 or eS31) or to a ubiquitin-related protein (either RUB1 or RUB2). Following translation, extension protein is cleaved from ubiquitin.</text>
</comment>
<comment type="similarity">
    <text evidence="4">In the N-terminal section; belongs to the ubiquitin family.</text>
</comment>
<comment type="similarity">
    <text evidence="4">In the C-terminal section; belongs to the eukaryotic ribosomal protein eL40 family.</text>
</comment>
<organism>
    <name type="scientific">Arabidopsis thaliana</name>
    <name type="common">Mouse-ear cress</name>
    <dbReference type="NCBI Taxonomy" id="3702"/>
    <lineage>
        <taxon>Eukaryota</taxon>
        <taxon>Viridiplantae</taxon>
        <taxon>Streptophyta</taxon>
        <taxon>Embryophyta</taxon>
        <taxon>Tracheophyta</taxon>
        <taxon>Spermatophyta</taxon>
        <taxon>Magnoliopsida</taxon>
        <taxon>eudicotyledons</taxon>
        <taxon>Gunneridae</taxon>
        <taxon>Pentapetalae</taxon>
        <taxon>rosids</taxon>
        <taxon>malvids</taxon>
        <taxon>Brassicales</taxon>
        <taxon>Brassicaceae</taxon>
        <taxon>Camelineae</taxon>
        <taxon>Arabidopsis</taxon>
    </lineage>
</organism>
<proteinExistence type="evidence at transcript level"/>
<feature type="chain" id="PRO_0000396866" description="Ubiquitin">
    <location>
        <begin position="1"/>
        <end position="76"/>
    </location>
</feature>
<feature type="chain" id="PRO_0000396867" description="Large ribosomal subunit protein eL40y">
    <location>
        <begin position="77"/>
        <end position="128"/>
    </location>
</feature>
<feature type="domain" description="Ubiquitin-like" evidence="2">
    <location>
        <begin position="1"/>
        <end position="76"/>
    </location>
</feature>
<feature type="cross-link" description="Glycyl lysine isopeptide (Gly-Lys) (interchain with K-? in acceptor proteins)" evidence="2">
    <location>
        <position position="76"/>
    </location>
</feature>
<protein>
    <recommendedName>
        <fullName evidence="4">Ubiquitin-ribosomal protein eL40y fusion protein</fullName>
    </recommendedName>
    <alternativeName>
        <fullName>Protein EARLY-RESPONSIVE TO DEHYDRATION 16</fullName>
    </alternativeName>
    <alternativeName>
        <fullName>Protein EMBRYO DEFECTIVE 2167</fullName>
    </alternativeName>
    <alternativeName>
        <fullName>Protein HAPLESS 4</fullName>
    </alternativeName>
    <component>
        <recommendedName>
            <fullName>Ubiquitin</fullName>
        </recommendedName>
    </component>
    <component>
        <recommendedName>
            <fullName evidence="3">Large ribosomal subunit protein eL40y</fullName>
        </recommendedName>
        <alternativeName>
            <fullName>60S ribosomal protein L40-2</fullName>
        </alternativeName>
        <alternativeName>
            <fullName>CEP52</fullName>
        </alternativeName>
    </component>
</protein>
<sequence>MQIFVKTLTGKTITLEVESSDTIDNVKAKIQDKEGIPPDQQRLIFAGKQLEDGRTLADYNIQKESTLHLVLRLRGGIIEPSLMMLARKYNQDKMICRKCYARLHPRAVNCRKKKCGHSNQLRPKKKIK</sequence>
<name>RL40B_ARATH</name>
<accession>Q42202</accession>
<accession>O80715</accession>
<accession>P19232</accession>
<accession>P59263</accession>
<accession>Q38875</accession>
<accession>Q9LDJ2</accession>
<accession>Q9LYW1</accession>
<accession>Q9M0W3</accession>
<accession>Q9M1P9</accession>
<accession>Q9S7X3</accession>
<gene>
    <name type="primary">RPL40B</name>
    <name type="synonym">EMB2167</name>
    <name type="synonym">ERD16</name>
    <name type="synonym">HAP4</name>
    <name type="synonym">UBQ1</name>
    <name type="ordered locus">At3g52590</name>
    <name type="ORF">F22O6_30</name>
    <name type="ORF">F3C22.8</name>
</gene>
<reference key="1">
    <citation type="journal article" date="1990" name="J. Biol. Chem.">
        <title>Ubiquitin extension proteins of Arabidopsis thaliana. Structure, localization, and expression of their promoters in transgenic tobacco.</title>
        <authorList>
            <person name="Callis J."/>
            <person name="Raasch J.A."/>
            <person name="Vierstra R.D."/>
        </authorList>
    </citation>
    <scope>NUCLEOTIDE SEQUENCE [GENOMIC DNA]</scope>
    <source>
        <strain>cv. Columbia</strain>
    </source>
</reference>
<reference key="2">
    <citation type="journal article" date="2000" name="Nature">
        <title>Sequence and analysis of chromosome 3 of the plant Arabidopsis thaliana.</title>
        <authorList>
            <person name="Salanoubat M."/>
            <person name="Lemcke K."/>
            <person name="Rieger M."/>
            <person name="Ansorge W."/>
            <person name="Unseld M."/>
            <person name="Fartmann B."/>
            <person name="Valle G."/>
            <person name="Bloecker H."/>
            <person name="Perez-Alonso M."/>
            <person name="Obermaier B."/>
            <person name="Delseny M."/>
            <person name="Boutry M."/>
            <person name="Grivell L.A."/>
            <person name="Mache R."/>
            <person name="Puigdomenech P."/>
            <person name="De Simone V."/>
            <person name="Choisne N."/>
            <person name="Artiguenave F."/>
            <person name="Robert C."/>
            <person name="Brottier P."/>
            <person name="Wincker P."/>
            <person name="Cattolico L."/>
            <person name="Weissenbach J."/>
            <person name="Saurin W."/>
            <person name="Quetier F."/>
            <person name="Schaefer M."/>
            <person name="Mueller-Auer S."/>
            <person name="Gabel C."/>
            <person name="Fuchs M."/>
            <person name="Benes V."/>
            <person name="Wurmbach E."/>
            <person name="Drzonek H."/>
            <person name="Erfle H."/>
            <person name="Jordan N."/>
            <person name="Bangert S."/>
            <person name="Wiedelmann R."/>
            <person name="Kranz H."/>
            <person name="Voss H."/>
            <person name="Holland R."/>
            <person name="Brandt P."/>
            <person name="Nyakatura G."/>
            <person name="Vezzi A."/>
            <person name="D'Angelo M."/>
            <person name="Pallavicini A."/>
            <person name="Toppo S."/>
            <person name="Simionati B."/>
            <person name="Conrad A."/>
            <person name="Hornischer K."/>
            <person name="Kauer G."/>
            <person name="Loehnert T.-H."/>
            <person name="Nordsiek G."/>
            <person name="Reichelt J."/>
            <person name="Scharfe M."/>
            <person name="Schoen O."/>
            <person name="Bargues M."/>
            <person name="Terol J."/>
            <person name="Climent J."/>
            <person name="Navarro P."/>
            <person name="Collado C."/>
            <person name="Perez-Perez A."/>
            <person name="Ottenwaelder B."/>
            <person name="Duchemin D."/>
            <person name="Cooke R."/>
            <person name="Laudie M."/>
            <person name="Berger-Llauro C."/>
            <person name="Purnelle B."/>
            <person name="Masuy D."/>
            <person name="de Haan M."/>
            <person name="Maarse A.C."/>
            <person name="Alcaraz J.-P."/>
            <person name="Cottet A."/>
            <person name="Casacuberta E."/>
            <person name="Monfort A."/>
            <person name="Argiriou A."/>
            <person name="Flores M."/>
            <person name="Liguori R."/>
            <person name="Vitale D."/>
            <person name="Mannhaupt G."/>
            <person name="Haase D."/>
            <person name="Schoof H."/>
            <person name="Rudd S."/>
            <person name="Zaccaria P."/>
            <person name="Mewes H.-W."/>
            <person name="Mayer K.F.X."/>
            <person name="Kaul S."/>
            <person name="Town C.D."/>
            <person name="Koo H.L."/>
            <person name="Tallon L.J."/>
            <person name="Jenkins J."/>
            <person name="Rooney T."/>
            <person name="Rizzo M."/>
            <person name="Walts A."/>
            <person name="Utterback T."/>
            <person name="Fujii C.Y."/>
            <person name="Shea T.P."/>
            <person name="Creasy T.H."/>
            <person name="Haas B."/>
            <person name="Maiti R."/>
            <person name="Wu D."/>
            <person name="Peterson J."/>
            <person name="Van Aken S."/>
            <person name="Pai G."/>
            <person name="Militscher J."/>
            <person name="Sellers P."/>
            <person name="Gill J.E."/>
            <person name="Feldblyum T.V."/>
            <person name="Preuss D."/>
            <person name="Lin X."/>
            <person name="Nierman W.C."/>
            <person name="Salzberg S.L."/>
            <person name="White O."/>
            <person name="Venter J.C."/>
            <person name="Fraser C.M."/>
            <person name="Kaneko T."/>
            <person name="Nakamura Y."/>
            <person name="Sato S."/>
            <person name="Kato T."/>
            <person name="Asamizu E."/>
            <person name="Sasamoto S."/>
            <person name="Kimura T."/>
            <person name="Idesawa K."/>
            <person name="Kawashima K."/>
            <person name="Kishida Y."/>
            <person name="Kiyokawa C."/>
            <person name="Kohara M."/>
            <person name="Matsumoto M."/>
            <person name="Matsuno A."/>
            <person name="Muraki A."/>
            <person name="Nakayama S."/>
            <person name="Nakazaki N."/>
            <person name="Shinpo S."/>
            <person name="Takeuchi C."/>
            <person name="Wada T."/>
            <person name="Watanabe A."/>
            <person name="Yamada M."/>
            <person name="Yasuda M."/>
            <person name="Tabata S."/>
        </authorList>
    </citation>
    <scope>NUCLEOTIDE SEQUENCE [LARGE SCALE GENOMIC DNA]</scope>
    <source>
        <strain>cv. Columbia</strain>
    </source>
</reference>
<reference key="3">
    <citation type="journal article" date="2017" name="Plant J.">
        <title>Araport11: a complete reannotation of the Arabidopsis thaliana reference genome.</title>
        <authorList>
            <person name="Cheng C.Y."/>
            <person name="Krishnakumar V."/>
            <person name="Chan A.P."/>
            <person name="Thibaud-Nissen F."/>
            <person name="Schobel S."/>
            <person name="Town C.D."/>
        </authorList>
    </citation>
    <scope>GENOME REANNOTATION</scope>
    <source>
        <strain>cv. Columbia</strain>
    </source>
</reference>
<reference key="4">
    <citation type="journal article" date="2003" name="Science">
        <title>Empirical analysis of transcriptional activity in the Arabidopsis genome.</title>
        <authorList>
            <person name="Yamada K."/>
            <person name="Lim J."/>
            <person name="Dale J.M."/>
            <person name="Chen H."/>
            <person name="Shinn P."/>
            <person name="Palm C.J."/>
            <person name="Southwick A.M."/>
            <person name="Wu H.C."/>
            <person name="Kim C.J."/>
            <person name="Nguyen M."/>
            <person name="Pham P.K."/>
            <person name="Cheuk R.F."/>
            <person name="Karlin-Newmann G."/>
            <person name="Liu S.X."/>
            <person name="Lam B."/>
            <person name="Sakano H."/>
            <person name="Wu T."/>
            <person name="Yu G."/>
            <person name="Miranda M."/>
            <person name="Quach H.L."/>
            <person name="Tripp M."/>
            <person name="Chang C.H."/>
            <person name="Lee J.M."/>
            <person name="Toriumi M.J."/>
            <person name="Chan M.M."/>
            <person name="Tang C.C."/>
            <person name="Onodera C.S."/>
            <person name="Deng J.M."/>
            <person name="Akiyama K."/>
            <person name="Ansari Y."/>
            <person name="Arakawa T."/>
            <person name="Banh J."/>
            <person name="Banno F."/>
            <person name="Bowser L."/>
            <person name="Brooks S.Y."/>
            <person name="Carninci P."/>
            <person name="Chao Q."/>
            <person name="Choy N."/>
            <person name="Enju A."/>
            <person name="Goldsmith A.D."/>
            <person name="Gurjal M."/>
            <person name="Hansen N.F."/>
            <person name="Hayashizaki Y."/>
            <person name="Johnson-Hopson C."/>
            <person name="Hsuan V.W."/>
            <person name="Iida K."/>
            <person name="Karnes M."/>
            <person name="Khan S."/>
            <person name="Koesema E."/>
            <person name="Ishida J."/>
            <person name="Jiang P.X."/>
            <person name="Jones T."/>
            <person name="Kawai J."/>
            <person name="Kamiya A."/>
            <person name="Meyers C."/>
            <person name="Nakajima M."/>
            <person name="Narusaka M."/>
            <person name="Seki M."/>
            <person name="Sakurai T."/>
            <person name="Satou M."/>
            <person name="Tamse R."/>
            <person name="Vaysberg M."/>
            <person name="Wallender E.K."/>
            <person name="Wong C."/>
            <person name="Yamamura Y."/>
            <person name="Yuan S."/>
            <person name="Shinozaki K."/>
            <person name="Davis R.W."/>
            <person name="Theologis A."/>
            <person name="Ecker J.R."/>
        </authorList>
    </citation>
    <scope>NUCLEOTIDE SEQUENCE [LARGE SCALE MRNA]</scope>
    <source>
        <strain>cv. Columbia</strain>
    </source>
</reference>
<reference key="5">
    <citation type="submission" date="2002-03" db="EMBL/GenBank/DDBJ databases">
        <title>Full-length cDNA from Arabidopsis thaliana.</title>
        <authorList>
            <person name="Brover V.V."/>
            <person name="Troukhan M.E."/>
            <person name="Alexandrov N.A."/>
            <person name="Lu Y.-P."/>
            <person name="Flavell R.B."/>
            <person name="Feldmann K.A."/>
        </authorList>
    </citation>
    <scope>NUCLEOTIDE SEQUENCE [LARGE SCALE MRNA]</scope>
</reference>
<reference key="6">
    <citation type="journal article" date="1996" name="Plant J.">
        <title>Further progress towards a catalogue of all Arabidopsis genes: analysis of a set of 5000 non-redundant ESTs.</title>
        <authorList>
            <person name="Cooke R."/>
            <person name="Raynal M."/>
            <person name="Laudie M."/>
            <person name="Grellet F."/>
            <person name="Delseny M."/>
            <person name="Morris P.-C."/>
            <person name="Guerrier D."/>
            <person name="Giraudat J."/>
            <person name="Quigley F."/>
            <person name="Clabault G."/>
            <person name="Li Y.-F."/>
            <person name="Mache R."/>
            <person name="Krivitzky M."/>
            <person name="Gy I.J.-J."/>
            <person name="Kreis M."/>
            <person name="Lecharny A."/>
            <person name="Parmentier Y."/>
            <person name="Marbach J."/>
            <person name="Fleck J."/>
            <person name="Clement B."/>
            <person name="Philipps G."/>
            <person name="Herve C."/>
            <person name="Bardet C."/>
            <person name="Tremousaygue D."/>
            <person name="Lescure B."/>
            <person name="Lacomme C."/>
            <person name="Roby D."/>
            <person name="Jourjon M.-F."/>
            <person name="Chabrier P."/>
            <person name="Charpenteau J.-L."/>
            <person name="Desprez T."/>
            <person name="Amselem J."/>
            <person name="Chiapello H."/>
            <person name="Hoefte H."/>
        </authorList>
    </citation>
    <scope>NUCLEOTIDE SEQUENCE [LARGE SCALE MRNA] OF 5-96</scope>
    <source>
        <strain>cv. Columbia</strain>
    </source>
</reference>
<reference key="7">
    <citation type="journal article" date="2001" name="Plant Physiol.">
        <title>The organization of cytoplasmic ribosomal protein genes in the Arabidopsis genome.</title>
        <authorList>
            <person name="Barakat A."/>
            <person name="Szick-Miranda K."/>
            <person name="Chang I.-F."/>
            <person name="Guyot R."/>
            <person name="Blanc G."/>
            <person name="Cooke R."/>
            <person name="Delseny M."/>
            <person name="Bailey-Serres J."/>
        </authorList>
    </citation>
    <scope>GENE FAMILY ORGANIZATION</scope>
    <scope>NOMENCLATURE</scope>
</reference>
<reference key="8">
    <citation type="journal article" date="2023" name="Plant Cell">
        <title>An updated nomenclature for plant ribosomal protein genes.</title>
        <authorList>
            <person name="Scarpin M.R."/>
            <person name="Busche M."/>
            <person name="Martinez R.E."/>
            <person name="Harper L.C."/>
            <person name="Reiser L."/>
            <person name="Szakonyi D."/>
            <person name="Merchante C."/>
            <person name="Lan T."/>
            <person name="Xiong W."/>
            <person name="Mo B."/>
            <person name="Tang G."/>
            <person name="Chen X."/>
            <person name="Bailey-Serres J."/>
            <person name="Browning K.S."/>
            <person name="Brunkard J.O."/>
        </authorList>
    </citation>
    <scope>NOMENCLATURE</scope>
</reference>